<protein>
    <recommendedName>
        <fullName>D(3) dopamine receptor</fullName>
    </recommendedName>
    <alternativeName>
        <fullName>Dopamine D3 receptor</fullName>
    </alternativeName>
</protein>
<accession>P30728</accession>
<evidence type="ECO:0000250" key="1"/>
<evidence type="ECO:0000250" key="2">
    <source>
        <dbReference type="UniProtKB" id="P19020"/>
    </source>
</evidence>
<evidence type="ECO:0000250" key="3">
    <source>
        <dbReference type="UniProtKB" id="P35462"/>
    </source>
</evidence>
<evidence type="ECO:0000255" key="4"/>
<evidence type="ECO:0000255" key="5">
    <source>
        <dbReference type="PROSITE-ProRule" id="PRU00521"/>
    </source>
</evidence>
<evidence type="ECO:0000303" key="6">
    <source>
    </source>
</evidence>
<sequence>MAPLSQISSHINSTCGAENSTGVNRARPHAYYALSYCALILAIIFGNGLVCAAVLRERALQTTTNYLVVSLAVADLLVATLVMPWVVYLEVTGGVWNFSRICCDVFVTLDVMMCTASILNLCAISIDRYTAVVMPVHYQHGTGQSSCRRVALMITAVWVLAFAVSCPLLFGFNTTGDPSICSISNPDFVIYSSVVSFYVPFGVTVLVYARIYMVLRQRRRKRILTRQNSQCISIRPGFPQQSSCLRLHPIRQFSIRARFLSDATGQMEHIEDKPYPQKCQDPLLSHLQPLSPGQTHGELKRYYSICQDTALRHPNFEGGGGMSQVERTRNSLSPTMAPKLSLEVRKLSNGRLSTSLKLGPLQPRGVPLREKKATQMVVIVLGAFIVCWLPFFLTHVLNTHCQACHVSPELYRATTWLGYVNSALNPVIYTTFNIEFRKAFLKILSC</sequence>
<organism>
    <name type="scientific">Mus musculus</name>
    <name type="common">Mouse</name>
    <dbReference type="NCBI Taxonomy" id="10090"/>
    <lineage>
        <taxon>Eukaryota</taxon>
        <taxon>Metazoa</taxon>
        <taxon>Chordata</taxon>
        <taxon>Craniata</taxon>
        <taxon>Vertebrata</taxon>
        <taxon>Euteleostomi</taxon>
        <taxon>Mammalia</taxon>
        <taxon>Eutheria</taxon>
        <taxon>Euarchontoglires</taxon>
        <taxon>Glires</taxon>
        <taxon>Rodentia</taxon>
        <taxon>Myomorpha</taxon>
        <taxon>Muroidea</taxon>
        <taxon>Muridae</taxon>
        <taxon>Murinae</taxon>
        <taxon>Mus</taxon>
        <taxon>Mus</taxon>
    </lineage>
</organism>
<name>DRD3_MOUSE</name>
<reference key="1">
    <citation type="journal article" date="1993" name="J. Biol. Chem.">
        <title>A novel short isoform of the D3 dopamine receptor generated by alternative splicing in the third cytoplasmic loop.</title>
        <authorList>
            <person name="Fishburn C.S."/>
            <person name="Belleli D."/>
            <person name="David C."/>
            <person name="Carmon S."/>
            <person name="Fuchs S."/>
        </authorList>
    </citation>
    <scope>NUCLEOTIDE SEQUENCE [MRNA] (ISOFORMS D3LONG AND D3SHORT)</scope>
    <source>
        <strain>BALB/cJ</strain>
    </source>
</reference>
<reference key="2">
    <citation type="journal article" date="1995" name="DNA Cell Biol.">
        <title>Molecular cloning and characterization of the mouse dopamine D3 receptor gene: an additional intron and an mRNA variant.</title>
        <authorList>
            <person name="Fu D."/>
            <person name="Skryabin B.V."/>
            <person name="Brosius J."/>
            <person name="Robakis N.K."/>
        </authorList>
    </citation>
    <scope>NUCLEOTIDE SEQUENCE [GENOMIC DNA]</scope>
</reference>
<gene>
    <name type="primary">Drd3</name>
</gene>
<comment type="function">
    <text evidence="1">Dopamine receptor whose activity is mediated by G proteins which inhibit adenylyl cyclase. Promotes cell proliferation (By similarity).</text>
</comment>
<comment type="subunit">
    <text evidence="2 3">Interacts with CLIC6 (By similarity). Interacts with GRK4. Interacts with PALM. Interacts with FLNA (via filamin repeat 21); increases PKA-mediated phosphorylation of FLNA (By similarity).</text>
</comment>
<comment type="subcellular location">
    <subcellularLocation>
        <location>Cell membrane</location>
        <topology>Multi-pass membrane protein</topology>
    </subcellularLocation>
</comment>
<comment type="alternative products">
    <event type="alternative splicing"/>
    <isoform>
        <id>P30728-1</id>
        <name>D3Long</name>
        <sequence type="displayed"/>
    </isoform>
    <isoform>
        <id>P30728-2</id>
        <name>D3Short</name>
        <sequence type="described" ref="VSP_001873"/>
    </isoform>
</comment>
<comment type="PTM">
    <text evidence="3">Phosphorylated by GRK4.</text>
</comment>
<comment type="PTM">
    <text evidence="3">Palmitoylated.</text>
</comment>
<comment type="similarity">
    <text evidence="5">Belongs to the G-protein coupled receptor 1 family.</text>
</comment>
<dbReference type="EMBL" id="X67274">
    <property type="protein sequence ID" value="CAA47691.1"/>
    <property type="molecule type" value="mRNA"/>
</dbReference>
<dbReference type="EMBL" id="S78580">
    <property type="protein sequence ID" value="AAB35066.2"/>
    <property type="molecule type" value="Genomic_DNA"/>
</dbReference>
<dbReference type="EMBL" id="S78574">
    <property type="protein sequence ID" value="AAB35066.2"/>
    <property type="status" value="JOINED"/>
    <property type="molecule type" value="Genomic_DNA"/>
</dbReference>
<dbReference type="EMBL" id="S78638">
    <property type="protein sequence ID" value="AAB35066.2"/>
    <property type="status" value="JOINED"/>
    <property type="molecule type" value="Genomic_DNA"/>
</dbReference>
<dbReference type="EMBL" id="S78577">
    <property type="protein sequence ID" value="AAB35066.2"/>
    <property type="status" value="JOINED"/>
    <property type="molecule type" value="Genomic_DNA"/>
</dbReference>
<dbReference type="EMBL" id="S78578">
    <property type="protein sequence ID" value="AAB35066.2"/>
    <property type="status" value="JOINED"/>
    <property type="molecule type" value="Genomic_DNA"/>
</dbReference>
<dbReference type="EMBL" id="S78579">
    <property type="protein sequence ID" value="AAB35066.2"/>
    <property type="status" value="JOINED"/>
    <property type="molecule type" value="Genomic_DNA"/>
</dbReference>
<dbReference type="EMBL" id="S78639">
    <property type="protein sequence ID" value="AAB35066.2"/>
    <property type="status" value="JOINED"/>
    <property type="molecule type" value="Genomic_DNA"/>
</dbReference>
<dbReference type="CCDS" id="CCDS28179.1">
    <molecule id="P30728-1"/>
</dbReference>
<dbReference type="PIR" id="I48322">
    <property type="entry name" value="I48322"/>
</dbReference>
<dbReference type="RefSeq" id="NP_031903.1">
    <molecule id="P30728-1"/>
    <property type="nucleotide sequence ID" value="NM_007877.2"/>
</dbReference>
<dbReference type="SMR" id="P30728"/>
<dbReference type="BioGRID" id="199307">
    <property type="interactions" value="2"/>
</dbReference>
<dbReference type="CORUM" id="P30728"/>
<dbReference type="FunCoup" id="P30728">
    <property type="interactions" value="522"/>
</dbReference>
<dbReference type="STRING" id="10090.ENSMUSP00000023390"/>
<dbReference type="BindingDB" id="P30728"/>
<dbReference type="ChEMBL" id="CHEMBL3441"/>
<dbReference type="DrugCentral" id="P30728"/>
<dbReference type="GlyCosmos" id="P30728">
    <property type="glycosylation" value="4 sites, No reported glycans"/>
</dbReference>
<dbReference type="GlyGen" id="P30728">
    <property type="glycosylation" value="4 sites"/>
</dbReference>
<dbReference type="PhosphoSitePlus" id="P30728"/>
<dbReference type="PaxDb" id="10090-ENSMUSP00000023390"/>
<dbReference type="Antibodypedia" id="16482">
    <property type="antibodies" value="288 antibodies from 38 providers"/>
</dbReference>
<dbReference type="DNASU" id="13490"/>
<dbReference type="Ensembl" id="ENSMUST00000023390.5">
    <molecule id="P30728-1"/>
    <property type="protein sequence ID" value="ENSMUSP00000023390.5"/>
    <property type="gene ID" value="ENSMUSG00000022705.6"/>
</dbReference>
<dbReference type="GeneID" id="13490"/>
<dbReference type="KEGG" id="mmu:13490"/>
<dbReference type="UCSC" id="uc007zgi.1">
    <molecule id="P30728-1"/>
    <property type="organism name" value="mouse"/>
</dbReference>
<dbReference type="AGR" id="MGI:94925"/>
<dbReference type="CTD" id="1814"/>
<dbReference type="MGI" id="MGI:94925">
    <property type="gene designation" value="Drd3"/>
</dbReference>
<dbReference type="VEuPathDB" id="HostDB:ENSMUSG00000022705"/>
<dbReference type="eggNOG" id="KOG3656">
    <property type="taxonomic scope" value="Eukaryota"/>
</dbReference>
<dbReference type="GeneTree" id="ENSGT00940000159661"/>
<dbReference type="HOGENOM" id="CLU_009579_11_1_1"/>
<dbReference type="InParanoid" id="P30728"/>
<dbReference type="OMA" id="SNGRMMT"/>
<dbReference type="OrthoDB" id="10034726at2759"/>
<dbReference type="PhylomeDB" id="P30728"/>
<dbReference type="TreeFam" id="TF334382"/>
<dbReference type="Reactome" id="R-MMU-390651">
    <property type="pathway name" value="Dopamine receptors"/>
</dbReference>
<dbReference type="Reactome" id="R-MMU-418594">
    <property type="pathway name" value="G alpha (i) signalling events"/>
</dbReference>
<dbReference type="BioGRID-ORCS" id="13490">
    <property type="hits" value="4 hits in 78 CRISPR screens"/>
</dbReference>
<dbReference type="PRO" id="PR:P30728"/>
<dbReference type="Proteomes" id="UP000000589">
    <property type="component" value="Chromosome 16"/>
</dbReference>
<dbReference type="RNAct" id="P30728">
    <property type="molecule type" value="protein"/>
</dbReference>
<dbReference type="Bgee" id="ENSMUSG00000022705">
    <property type="expression patterns" value="Expressed in blastoderm cell in morula and 53 other cell types or tissues"/>
</dbReference>
<dbReference type="ExpressionAtlas" id="P30728">
    <property type="expression patterns" value="baseline and differential"/>
</dbReference>
<dbReference type="GO" id="GO:0098691">
    <property type="term" value="C:dopaminergic synapse"/>
    <property type="evidence" value="ECO:0000314"/>
    <property type="project" value="SynGO"/>
</dbReference>
<dbReference type="GO" id="GO:0016020">
    <property type="term" value="C:membrane"/>
    <property type="evidence" value="ECO:0000314"/>
    <property type="project" value="MGI"/>
</dbReference>
<dbReference type="GO" id="GO:0005886">
    <property type="term" value="C:plasma membrane"/>
    <property type="evidence" value="ECO:0000314"/>
    <property type="project" value="MGI"/>
</dbReference>
<dbReference type="GO" id="GO:0045202">
    <property type="term" value="C:synapse"/>
    <property type="evidence" value="ECO:0007669"/>
    <property type="project" value="GOC"/>
</dbReference>
<dbReference type="GO" id="GO:0001591">
    <property type="term" value="F:dopamine neurotransmitter receptor activity, coupled via Gi/Go"/>
    <property type="evidence" value="ECO:0000314"/>
    <property type="project" value="MGI"/>
</dbReference>
<dbReference type="GO" id="GO:0004930">
    <property type="term" value="F:G protein-coupled receptor activity"/>
    <property type="evidence" value="ECO:0007669"/>
    <property type="project" value="UniProtKB-KW"/>
</dbReference>
<dbReference type="GO" id="GO:0007191">
    <property type="term" value="P:adenylate cyclase-activating dopamine receptor signaling pathway"/>
    <property type="evidence" value="ECO:0000314"/>
    <property type="project" value="MGI"/>
</dbReference>
<dbReference type="GO" id="GO:0007195">
    <property type="term" value="P:adenylate cyclase-inhibiting dopamine receptor signaling pathway"/>
    <property type="evidence" value="ECO:0007669"/>
    <property type="project" value="InterPro"/>
</dbReference>
<dbReference type="GO" id="GO:0048148">
    <property type="term" value="P:behavioral response to cocaine"/>
    <property type="evidence" value="ECO:0000315"/>
    <property type="project" value="BHF-UCL"/>
</dbReference>
<dbReference type="GO" id="GO:0032922">
    <property type="term" value="P:circadian regulation of gene expression"/>
    <property type="evidence" value="ECO:0000315"/>
    <property type="project" value="MGI"/>
</dbReference>
<dbReference type="GO" id="GO:0007212">
    <property type="term" value="P:G protein-coupled dopamine receptor signaling pathway"/>
    <property type="evidence" value="ECO:0000315"/>
    <property type="project" value="MGI"/>
</dbReference>
<dbReference type="GO" id="GO:0007626">
    <property type="term" value="P:locomotory behavior"/>
    <property type="evidence" value="ECO:0000315"/>
    <property type="project" value="MGI"/>
</dbReference>
<dbReference type="GO" id="GO:0050883">
    <property type="term" value="P:musculoskeletal movement, spinal reflex action"/>
    <property type="evidence" value="ECO:0000315"/>
    <property type="project" value="MGI"/>
</dbReference>
<dbReference type="GO" id="GO:0045776">
    <property type="term" value="P:negative regulation of blood pressure"/>
    <property type="evidence" value="ECO:0000315"/>
    <property type="project" value="MGI"/>
</dbReference>
<dbReference type="GO" id="GO:0060160">
    <property type="term" value="P:negative regulation of dopamine receptor signaling pathway"/>
    <property type="evidence" value="ECO:0000316"/>
    <property type="project" value="MGI"/>
</dbReference>
<dbReference type="GO" id="GO:0048715">
    <property type="term" value="P:negative regulation of oligodendrocyte differentiation"/>
    <property type="evidence" value="ECO:0000314"/>
    <property type="project" value="MGI"/>
</dbReference>
<dbReference type="GO" id="GO:0051898">
    <property type="term" value="P:negative regulation of phosphatidylinositol 3-kinase/protein kinase B signal transduction"/>
    <property type="evidence" value="ECO:0000315"/>
    <property type="project" value="MGI"/>
</dbReference>
<dbReference type="GO" id="GO:0048709">
    <property type="term" value="P:oligodendrocyte differentiation"/>
    <property type="evidence" value="ECO:0000314"/>
    <property type="project" value="MGI"/>
</dbReference>
<dbReference type="GO" id="GO:0043491">
    <property type="term" value="P:phosphatidylinositol 3-kinase/protein kinase B signal transduction"/>
    <property type="evidence" value="ECO:0000315"/>
    <property type="project" value="MGI"/>
</dbReference>
<dbReference type="GO" id="GO:0060161">
    <property type="term" value="P:positive regulation of dopamine receptor signaling pathway"/>
    <property type="evidence" value="ECO:0000315"/>
    <property type="project" value="MGI"/>
</dbReference>
<dbReference type="GO" id="GO:0002016">
    <property type="term" value="P:regulation of blood volume by renin-angiotensin"/>
    <property type="evidence" value="ECO:0000315"/>
    <property type="project" value="MGI"/>
</dbReference>
<dbReference type="GO" id="GO:0014059">
    <property type="term" value="P:regulation of dopamine secretion"/>
    <property type="evidence" value="ECO:0000315"/>
    <property type="project" value="MGI"/>
</dbReference>
<dbReference type="GO" id="GO:0019216">
    <property type="term" value="P:regulation of lipid metabolic process"/>
    <property type="evidence" value="ECO:0000315"/>
    <property type="project" value="MGI"/>
</dbReference>
<dbReference type="GO" id="GO:0040014">
    <property type="term" value="P:regulation of multicellular organism growth"/>
    <property type="evidence" value="ECO:0000315"/>
    <property type="project" value="MGI"/>
</dbReference>
<dbReference type="GO" id="GO:0051580">
    <property type="term" value="P:regulation of neurotransmitter uptake"/>
    <property type="evidence" value="ECO:0000314"/>
    <property type="project" value="SynGO"/>
</dbReference>
<dbReference type="GO" id="GO:0001975">
    <property type="term" value="P:response to amphetamine"/>
    <property type="evidence" value="ECO:0000316"/>
    <property type="project" value="MGI"/>
</dbReference>
<dbReference type="GO" id="GO:0042220">
    <property type="term" value="P:response to cocaine"/>
    <property type="evidence" value="ECO:0000315"/>
    <property type="project" value="MGI"/>
</dbReference>
<dbReference type="GO" id="GO:0045471">
    <property type="term" value="P:response to ethanol"/>
    <property type="evidence" value="ECO:0000315"/>
    <property type="project" value="MGI"/>
</dbReference>
<dbReference type="GO" id="GO:0043278">
    <property type="term" value="P:response to morphine"/>
    <property type="evidence" value="ECO:0000315"/>
    <property type="project" value="MGI"/>
</dbReference>
<dbReference type="GO" id="GO:0008542">
    <property type="term" value="P:visual learning"/>
    <property type="evidence" value="ECO:0000315"/>
    <property type="project" value="MGI"/>
</dbReference>
<dbReference type="CDD" id="cd15310">
    <property type="entry name" value="7tmA_D3_dopamine_R"/>
    <property type="match status" value="1"/>
</dbReference>
<dbReference type="FunFam" id="1.20.1070.10:FF:000424">
    <property type="entry name" value="D(3) dopamine receptor"/>
    <property type="match status" value="1"/>
</dbReference>
<dbReference type="FunFam" id="1.20.1070.10:FF:000287">
    <property type="entry name" value="Dopamine receptor D3"/>
    <property type="match status" value="1"/>
</dbReference>
<dbReference type="Gene3D" id="1.20.1070.10">
    <property type="entry name" value="Rhodopsin 7-helix transmembrane proteins"/>
    <property type="match status" value="2"/>
</dbReference>
<dbReference type="InterPro" id="IPR001620">
    <property type="entry name" value="Dopamine_D3_rcpt"/>
</dbReference>
<dbReference type="InterPro" id="IPR000929">
    <property type="entry name" value="Dopamine_rcpt"/>
</dbReference>
<dbReference type="InterPro" id="IPR000276">
    <property type="entry name" value="GPCR_Rhodpsn"/>
</dbReference>
<dbReference type="InterPro" id="IPR017452">
    <property type="entry name" value="GPCR_Rhodpsn_7TM"/>
</dbReference>
<dbReference type="PANTHER" id="PTHR24248">
    <property type="entry name" value="ADRENERGIC RECEPTOR-RELATED G-PROTEIN COUPLED RECEPTOR"/>
    <property type="match status" value="1"/>
</dbReference>
<dbReference type="PANTHER" id="PTHR24248:SF154">
    <property type="entry name" value="D(3) DOPAMINE RECEPTOR"/>
    <property type="match status" value="1"/>
</dbReference>
<dbReference type="Pfam" id="PF00001">
    <property type="entry name" value="7tm_1"/>
    <property type="match status" value="1"/>
</dbReference>
<dbReference type="PRINTS" id="PR00568">
    <property type="entry name" value="DOPAMINED3R"/>
</dbReference>
<dbReference type="PRINTS" id="PR00242">
    <property type="entry name" value="DOPAMINER"/>
</dbReference>
<dbReference type="PRINTS" id="PR00237">
    <property type="entry name" value="GPCRRHODOPSN"/>
</dbReference>
<dbReference type="SMART" id="SM01381">
    <property type="entry name" value="7TM_GPCR_Srsx"/>
    <property type="match status" value="1"/>
</dbReference>
<dbReference type="SUPFAM" id="SSF81321">
    <property type="entry name" value="Family A G protein-coupled receptor-like"/>
    <property type="match status" value="1"/>
</dbReference>
<dbReference type="PROSITE" id="PS00237">
    <property type="entry name" value="G_PROTEIN_RECEP_F1_1"/>
    <property type="match status" value="1"/>
</dbReference>
<dbReference type="PROSITE" id="PS50262">
    <property type="entry name" value="G_PROTEIN_RECEP_F1_2"/>
    <property type="match status" value="1"/>
</dbReference>
<feature type="chain" id="PRO_0000069398" description="D(3) dopamine receptor">
    <location>
        <begin position="1"/>
        <end position="446"/>
    </location>
</feature>
<feature type="topological domain" description="Extracellular" evidence="3">
    <location>
        <begin position="1"/>
        <end position="32"/>
    </location>
</feature>
<feature type="transmembrane region" description="Helical; Name=1" evidence="3">
    <location>
        <begin position="33"/>
        <end position="55"/>
    </location>
</feature>
<feature type="topological domain" description="Cytoplasmic" evidence="3">
    <location>
        <begin position="56"/>
        <end position="65"/>
    </location>
</feature>
<feature type="transmembrane region" description="Helical; Name=2" evidence="3">
    <location>
        <begin position="66"/>
        <end position="88"/>
    </location>
</feature>
<feature type="topological domain" description="Extracellular" evidence="3">
    <location>
        <begin position="89"/>
        <end position="104"/>
    </location>
</feature>
<feature type="transmembrane region" description="Helical; Name=3" evidence="3">
    <location>
        <begin position="105"/>
        <end position="126"/>
    </location>
</feature>
<feature type="topological domain" description="Cytoplasmic" evidence="3">
    <location>
        <begin position="127"/>
        <end position="149"/>
    </location>
</feature>
<feature type="transmembrane region" description="Helical; Name=4" evidence="3">
    <location>
        <begin position="150"/>
        <end position="170"/>
    </location>
</feature>
<feature type="topological domain" description="Extracellular" evidence="3">
    <location>
        <begin position="171"/>
        <end position="187"/>
    </location>
</feature>
<feature type="transmembrane region" description="Helical; Name=5" evidence="3">
    <location>
        <begin position="188"/>
        <end position="209"/>
    </location>
</feature>
<feature type="topological domain" description="Cytoplasmic" evidence="3">
    <location>
        <begin position="210"/>
        <end position="375"/>
    </location>
</feature>
<feature type="transmembrane region" description="Helical; Name=6" evidence="3">
    <location>
        <begin position="376"/>
        <end position="397"/>
    </location>
</feature>
<feature type="topological domain" description="Extracellular" evidence="3">
    <location>
        <begin position="398"/>
        <end position="412"/>
    </location>
</feature>
<feature type="transmembrane region" description="Helical; Name=7" evidence="3">
    <location>
        <begin position="413"/>
        <end position="432"/>
    </location>
</feature>
<feature type="topological domain" description="Cytoplasmic" evidence="3">
    <location>
        <begin position="433"/>
        <end position="446"/>
    </location>
</feature>
<feature type="glycosylation site" description="N-linked (GlcNAc...) asparagine" evidence="4">
    <location>
        <position position="12"/>
    </location>
</feature>
<feature type="glycosylation site" description="N-linked (GlcNAc...) asparagine" evidence="4">
    <location>
        <position position="19"/>
    </location>
</feature>
<feature type="glycosylation site" description="N-linked (GlcNAc...) asparagine" evidence="4">
    <location>
        <position position="97"/>
    </location>
</feature>
<feature type="glycosylation site" description="N-linked (GlcNAc...) asparagine" evidence="4">
    <location>
        <position position="173"/>
    </location>
</feature>
<feature type="disulfide bond" evidence="5">
    <location>
        <begin position="103"/>
        <end position="181"/>
    </location>
</feature>
<feature type="disulfide bond" evidence="5">
    <location>
        <begin position="401"/>
        <end position="404"/>
    </location>
</feature>
<feature type="splice variant" id="VSP_001873" description="In isoform D3Short." evidence="6">
    <location>
        <begin position="268"/>
        <end position="288"/>
    </location>
</feature>
<keyword id="KW-0025">Alternative splicing</keyword>
<keyword id="KW-1003">Cell membrane</keyword>
<keyword id="KW-1015">Disulfide bond</keyword>
<keyword id="KW-0297">G-protein coupled receptor</keyword>
<keyword id="KW-0325">Glycoprotein</keyword>
<keyword id="KW-0449">Lipoprotein</keyword>
<keyword id="KW-0472">Membrane</keyword>
<keyword id="KW-0564">Palmitate</keyword>
<keyword id="KW-0675">Receptor</keyword>
<keyword id="KW-1185">Reference proteome</keyword>
<keyword id="KW-0807">Transducer</keyword>
<keyword id="KW-0812">Transmembrane</keyword>
<keyword id="KW-1133">Transmembrane helix</keyword>
<proteinExistence type="evidence at transcript level"/>